<keyword id="KW-0025">Alternative splicing</keyword>
<keyword id="KW-0067">ATP-binding</keyword>
<keyword id="KW-0418">Kinase</keyword>
<keyword id="KW-0547">Nucleotide-binding</keyword>
<keyword id="KW-1185">Reference proteome</keyword>
<keyword id="KW-0723">Serine/threonine-protein kinase</keyword>
<keyword id="KW-0808">Transferase</keyword>
<proteinExistence type="evidence at transcript level"/>
<evidence type="ECO:0000255" key="1">
    <source>
        <dbReference type="PROSITE-ProRule" id="PRU00159"/>
    </source>
</evidence>
<evidence type="ECO:0000255" key="2">
    <source>
        <dbReference type="PROSITE-ProRule" id="PRU10027"/>
    </source>
</evidence>
<evidence type="ECO:0000256" key="3">
    <source>
        <dbReference type="SAM" id="MobiDB-lite"/>
    </source>
</evidence>
<evidence type="ECO:0000269" key="4">
    <source>
    </source>
</evidence>
<evidence type="ECO:0000303" key="5">
    <source>
    </source>
</evidence>
<evidence type="ECO:0000303" key="6">
    <source ref="1"/>
</evidence>
<evidence type="ECO:0000305" key="7"/>
<feature type="chain" id="PRO_0000232640" description="Mitogen-activated protein kinase kinase kinase 19">
    <location>
        <begin position="1"/>
        <end position="1328"/>
    </location>
</feature>
<feature type="domain" description="Protein kinase" evidence="1">
    <location>
        <begin position="1061"/>
        <end position="1324"/>
    </location>
</feature>
<feature type="region of interest" description="Disordered" evidence="3">
    <location>
        <begin position="1"/>
        <end position="28"/>
    </location>
</feature>
<feature type="region of interest" description="Disordered" evidence="3">
    <location>
        <begin position="44"/>
        <end position="74"/>
    </location>
</feature>
<feature type="region of interest" description="Disordered" evidence="3">
    <location>
        <begin position="344"/>
        <end position="380"/>
    </location>
</feature>
<feature type="region of interest" description="Disordered" evidence="3">
    <location>
        <begin position="524"/>
        <end position="561"/>
    </location>
</feature>
<feature type="compositionally biased region" description="Basic and acidic residues" evidence="3">
    <location>
        <begin position="1"/>
        <end position="19"/>
    </location>
</feature>
<feature type="compositionally biased region" description="Basic and acidic residues" evidence="3">
    <location>
        <begin position="344"/>
        <end position="361"/>
    </location>
</feature>
<feature type="compositionally biased region" description="Polar residues" evidence="3">
    <location>
        <begin position="364"/>
        <end position="377"/>
    </location>
</feature>
<feature type="compositionally biased region" description="Basic and acidic residues" evidence="3">
    <location>
        <begin position="524"/>
        <end position="542"/>
    </location>
</feature>
<feature type="active site" description="Proton acceptor" evidence="1 2">
    <location>
        <position position="1186"/>
    </location>
</feature>
<feature type="binding site" evidence="1">
    <location>
        <begin position="1067"/>
        <end position="1075"/>
    </location>
    <ligand>
        <name>ATP</name>
        <dbReference type="ChEBI" id="CHEBI:30616"/>
    </ligand>
</feature>
<feature type="binding site" evidence="1">
    <location>
        <position position="1089"/>
    </location>
    <ligand>
        <name>ATP</name>
        <dbReference type="ChEBI" id="CHEBI:30616"/>
    </ligand>
</feature>
<feature type="splice variant" id="VSP_017924" description="In isoform 3." evidence="6">
    <location>
        <begin position="79"/>
        <end position="191"/>
    </location>
</feature>
<feature type="splice variant" id="VSP_055367" description="In isoform 7." evidence="5">
    <location>
        <begin position="207"/>
        <end position="1074"/>
    </location>
</feature>
<feature type="splice variant" id="VSP_017925" description="In isoform 4 and isoform 5." evidence="6">
    <location>
        <begin position="207"/>
        <end position="1024"/>
    </location>
</feature>
<feature type="splice variant" id="VSP_017926" description="In isoform 4." evidence="6">
    <location>
        <begin position="1064"/>
        <end position="1111"/>
    </location>
</feature>
<feature type="sequence variant" id="VAR_051687" description="In dbSNP:rs16831235.">
    <original>T</original>
    <variation>I</variation>
    <location>
        <position position="438"/>
    </location>
</feature>
<feature type="sequence variant" id="VAR_041334" description="In a breast pleomorphic lobular carcinoma sample; somatic mutation." evidence="4">
    <original>I</original>
    <variation>M</variation>
    <location>
        <position position="500"/>
    </location>
</feature>
<feature type="sequence variant" id="VAR_051688" description="In dbSNP:rs1112542.">
    <original>E</original>
    <variation>Q</variation>
    <location>
        <position position="676"/>
    </location>
</feature>
<feature type="sequence variant" id="VAR_051689" description="In dbSNP:rs3905317.">
    <original>E</original>
    <variation>G</variation>
    <location>
        <position position="812"/>
    </location>
</feature>
<feature type="sequence conflict" description="In Ref. 3; AAH34417." evidence="7" ref="3">
    <original>GT</original>
    <variation>RE</variation>
    <location>
        <begin position="1073"/>
        <end position="1074"/>
    </location>
</feature>
<feature type="sequence conflict" description="In Ref. 4; BAB15538." evidence="7" ref="4">
    <original>A</original>
    <variation>V</variation>
    <location>
        <position position="1235"/>
    </location>
</feature>
<gene>
    <name type="primary">MAP3K19</name>
    <name type="synonym">RCK</name>
    <name type="synonym">YSK4</name>
</gene>
<sequence>MSSMPKPERHAESLLDICHDTNSSPTDLMTVTKNQNIILQSISRSEEFDQDGDCSHSTLVNEEEDPSGGRQDWQPRTEGVEITVTFPRDVSPPQEMSQEDLKEKNLINSSLQEWAQAHAVSHPNEIETVELRKKKLTMRPLVLQKEESSRELCNVNLGFLLPRSCLELNISKSVTREDAPHFLKEQQRKSEEFSTSHMKYSGRSIKFLLPPLSLLPTRSGVLTIPQNHKFPKEKERNIPSLTSFVPKLSVSVRQSDELSPSNEPPGALVKSLMDPTLRSSDGFIWSRNMCSFPKTNHHRQCLEKEENWKSKEIEECNKIEITHFEKGQSLVSFENLKEGNIPAVREEDIDCHGSKTRKPEEENSQYLSSRKNESSVAKNYEQDPEIVCTIPSKFQETQHSEITPSQDEEMRNNKAASKRVSLHKNEAMEPNNILEECTVLKSLSSVVFDDPIDKLPEGCSSMETNIKISIAERAKPEMSRMVPLIHITFPVDGSPKEPVIAKPSLQTRKGTIHNNHSVNIPVHQENDKHKMNSHRSKLDSKTKTSKKTPQNFVISTEGPIKPTMHKTSIKTQIFPALGLVDPRPWQLPRFQKKMPQIAKKQSTHRTQKPKKQSFPCICKNPGTQKSCVPLSVQPTEPRLNYLDLKYSDMFKEINSTANGPGIYEMFGTPVYCHVRETERDENTYYREICSAPSGRRITNKCRSSHSERKSNIRTRLSQKKTHMKCPKTSFGIKQEHKVLISKEKSSKAVHSNLHDIENGDGISEPDWQIKSSGNEFLSSKDEIHPMNLAQTPEQSMKQNEFPPVSDLSIVEEVSMEESTGDRDISNNQILTTSLRDLQELEELHHQIPFIPSEDSWAVPSEKNSNKYVQQEKQNTASLSKVNASRILTNDLEFDSVSDHSKTLTNFSFQAKQESASSQTYQYWVHYLDHDSLANKSITYQMFGKTLSGTNSISQEIMDSVNNEELTDELLGCLAAELLALDEKDNNSCQKMANETDPENLNLVLRWRGSTPKEMGRETTKVKIQRHSSGLRIYDREEKFLISNEKKIFSENSLKSEEPILWTKGEILGKGAYGTVYCGLTSQGQLIAVKQVALDTSNKLAAEKEYRKLQEEVDLLKALKHVNIVAYLGTCLQENTVSIFMEFVPGGSISSIINRFGPLPEMVFCKYTKQILQGVAYLHENCVVHRDIKGNNVMLMPTGIIKLIDFGCARRLAWAGLNGTHSDMLKSMHGTPYWMAPEVINESGYGRKSDIWSIGCTVFEMATGKPPLASMDRMAAMFYIGAHRGLMPPLPDHFSENAADFVRMCLTRDQHERPSALQLLKHSFLERSH</sequence>
<accession>Q56UN5</accession>
<accession>B2RP57</accession>
<accession>B7ZMH9</accession>
<accession>E2QRE3</accession>
<accession>Q56UN1</accession>
<accession>Q56UN2</accession>
<accession>Q56UN3</accession>
<accession>Q56UN4</accession>
<accession>Q8N4E9</accession>
<accession>Q9H5T2</accession>
<name>M3K19_HUMAN</name>
<protein>
    <recommendedName>
        <fullName>Mitogen-activated protein kinase kinase kinase 19</fullName>
        <ecNumber>2.7.11.1</ecNumber>
    </recommendedName>
    <alternativeName>
        <fullName>Regulated in COPD, protein kinase</fullName>
    </alternativeName>
    <alternativeName>
        <fullName>SPS1/STE20-related protein kinase YSK4</fullName>
    </alternativeName>
</protein>
<comment type="catalytic activity">
    <reaction>
        <text>L-seryl-[protein] + ATP = O-phospho-L-seryl-[protein] + ADP + H(+)</text>
        <dbReference type="Rhea" id="RHEA:17989"/>
        <dbReference type="Rhea" id="RHEA-COMP:9863"/>
        <dbReference type="Rhea" id="RHEA-COMP:11604"/>
        <dbReference type="ChEBI" id="CHEBI:15378"/>
        <dbReference type="ChEBI" id="CHEBI:29999"/>
        <dbReference type="ChEBI" id="CHEBI:30616"/>
        <dbReference type="ChEBI" id="CHEBI:83421"/>
        <dbReference type="ChEBI" id="CHEBI:456216"/>
        <dbReference type="EC" id="2.7.11.1"/>
    </reaction>
</comment>
<comment type="catalytic activity">
    <reaction>
        <text>L-threonyl-[protein] + ATP = O-phospho-L-threonyl-[protein] + ADP + H(+)</text>
        <dbReference type="Rhea" id="RHEA:46608"/>
        <dbReference type="Rhea" id="RHEA-COMP:11060"/>
        <dbReference type="Rhea" id="RHEA-COMP:11605"/>
        <dbReference type="ChEBI" id="CHEBI:15378"/>
        <dbReference type="ChEBI" id="CHEBI:30013"/>
        <dbReference type="ChEBI" id="CHEBI:30616"/>
        <dbReference type="ChEBI" id="CHEBI:61977"/>
        <dbReference type="ChEBI" id="CHEBI:456216"/>
        <dbReference type="EC" id="2.7.11.1"/>
    </reaction>
</comment>
<comment type="alternative products">
    <event type="alternative splicing"/>
    <isoform>
        <id>Q56UN5-1</id>
        <name>1</name>
        <sequence type="displayed"/>
    </isoform>
    <isoform>
        <id>Q56UN5-3</id>
        <name>3</name>
        <sequence type="described" ref="VSP_017924"/>
    </isoform>
    <isoform>
        <id>Q56UN5-4</id>
        <name>4</name>
        <sequence type="described" ref="VSP_017925 VSP_017926"/>
    </isoform>
    <isoform>
        <id>Q56UN5-5</id>
        <name>5</name>
        <sequence type="described" ref="VSP_017925"/>
    </isoform>
    <isoform>
        <id>Q56UN5-7</id>
        <name>7</name>
        <sequence type="described" ref="VSP_055367"/>
    </isoform>
</comment>
<comment type="similarity">
    <text evidence="7">Belongs to the protein kinase superfamily. STE Ser/Thr protein kinase family. STE20 subfamily.</text>
</comment>
<comment type="sequence caution" evidence="7">
    <conflict type="miscellaneous discrepancy">
        <sequence resource="EMBL-CDS" id="AAT81412"/>
    </conflict>
    <text>Non-canonical splice intron-exon junction.</text>
</comment>
<comment type="sequence caution" evidence="7">
    <conflict type="erroneous initiation">
        <sequence resource="EMBL-CDS" id="BAB15538"/>
    </conflict>
    <text>Truncated N-terminus.</text>
</comment>
<organism>
    <name type="scientific">Homo sapiens</name>
    <name type="common">Human</name>
    <dbReference type="NCBI Taxonomy" id="9606"/>
    <lineage>
        <taxon>Eukaryota</taxon>
        <taxon>Metazoa</taxon>
        <taxon>Chordata</taxon>
        <taxon>Craniata</taxon>
        <taxon>Vertebrata</taxon>
        <taxon>Euteleostomi</taxon>
        <taxon>Mammalia</taxon>
        <taxon>Eutheria</taxon>
        <taxon>Euarchontoglires</taxon>
        <taxon>Primates</taxon>
        <taxon>Haplorrhini</taxon>
        <taxon>Catarrhini</taxon>
        <taxon>Hominidae</taxon>
        <taxon>Homo</taxon>
    </lineage>
</organism>
<reference key="1">
    <citation type="submission" date="2004-03" db="EMBL/GenBank/DDBJ databases">
        <title>Molecular cloning and characterization of RCK, a MAPK kinase kinase that specifically phosphorylates MKK4.</title>
        <authorList>
            <person name="Watanabe S."/>
            <person name="Kondo S."/>
            <person name="Tanabe E."/>
            <person name="Takao E."/>
            <person name="Bacon K.B."/>
            <person name="Encinas J.A."/>
        </authorList>
    </citation>
    <scope>NUCLEOTIDE SEQUENCE [MRNA] (ISOFORMS 1; 3; 4 AND 5)</scope>
</reference>
<reference key="2">
    <citation type="journal article" date="2005" name="Nature">
        <title>Generation and annotation of the DNA sequences of human chromosomes 2 and 4.</title>
        <authorList>
            <person name="Hillier L.W."/>
            <person name="Graves T.A."/>
            <person name="Fulton R.S."/>
            <person name="Fulton L.A."/>
            <person name="Pepin K.H."/>
            <person name="Minx P."/>
            <person name="Wagner-McPherson C."/>
            <person name="Layman D."/>
            <person name="Wylie K."/>
            <person name="Sekhon M."/>
            <person name="Becker M.C."/>
            <person name="Fewell G.A."/>
            <person name="Delehaunty K.D."/>
            <person name="Miner T.L."/>
            <person name="Nash W.E."/>
            <person name="Kremitzki C."/>
            <person name="Oddy L."/>
            <person name="Du H."/>
            <person name="Sun H."/>
            <person name="Bradshaw-Cordum H."/>
            <person name="Ali J."/>
            <person name="Carter J."/>
            <person name="Cordes M."/>
            <person name="Harris A."/>
            <person name="Isak A."/>
            <person name="van Brunt A."/>
            <person name="Nguyen C."/>
            <person name="Du F."/>
            <person name="Courtney L."/>
            <person name="Kalicki J."/>
            <person name="Ozersky P."/>
            <person name="Abbott S."/>
            <person name="Armstrong J."/>
            <person name="Belter E.A."/>
            <person name="Caruso L."/>
            <person name="Cedroni M."/>
            <person name="Cotton M."/>
            <person name="Davidson T."/>
            <person name="Desai A."/>
            <person name="Elliott G."/>
            <person name="Erb T."/>
            <person name="Fronick C."/>
            <person name="Gaige T."/>
            <person name="Haakenson W."/>
            <person name="Haglund K."/>
            <person name="Holmes A."/>
            <person name="Harkins R."/>
            <person name="Kim K."/>
            <person name="Kruchowski S.S."/>
            <person name="Strong C.M."/>
            <person name="Grewal N."/>
            <person name="Goyea E."/>
            <person name="Hou S."/>
            <person name="Levy A."/>
            <person name="Martinka S."/>
            <person name="Mead K."/>
            <person name="McLellan M.D."/>
            <person name="Meyer R."/>
            <person name="Randall-Maher J."/>
            <person name="Tomlinson C."/>
            <person name="Dauphin-Kohlberg S."/>
            <person name="Kozlowicz-Reilly A."/>
            <person name="Shah N."/>
            <person name="Swearengen-Shahid S."/>
            <person name="Snider J."/>
            <person name="Strong J.T."/>
            <person name="Thompson J."/>
            <person name="Yoakum M."/>
            <person name="Leonard S."/>
            <person name="Pearman C."/>
            <person name="Trani L."/>
            <person name="Radionenko M."/>
            <person name="Waligorski J.E."/>
            <person name="Wang C."/>
            <person name="Rock S.M."/>
            <person name="Tin-Wollam A.-M."/>
            <person name="Maupin R."/>
            <person name="Latreille P."/>
            <person name="Wendl M.C."/>
            <person name="Yang S.-P."/>
            <person name="Pohl C."/>
            <person name="Wallis J.W."/>
            <person name="Spieth J."/>
            <person name="Bieri T.A."/>
            <person name="Berkowicz N."/>
            <person name="Nelson J.O."/>
            <person name="Osborne J."/>
            <person name="Ding L."/>
            <person name="Meyer R."/>
            <person name="Sabo A."/>
            <person name="Shotland Y."/>
            <person name="Sinha P."/>
            <person name="Wohldmann P.E."/>
            <person name="Cook L.L."/>
            <person name="Hickenbotham M.T."/>
            <person name="Eldred J."/>
            <person name="Williams D."/>
            <person name="Jones T.A."/>
            <person name="She X."/>
            <person name="Ciccarelli F.D."/>
            <person name="Izaurralde E."/>
            <person name="Taylor J."/>
            <person name="Schmutz J."/>
            <person name="Myers R.M."/>
            <person name="Cox D.R."/>
            <person name="Huang X."/>
            <person name="McPherson J.D."/>
            <person name="Mardis E.R."/>
            <person name="Clifton S.W."/>
            <person name="Warren W.C."/>
            <person name="Chinwalla A.T."/>
            <person name="Eddy S.R."/>
            <person name="Marra M.A."/>
            <person name="Ovcharenko I."/>
            <person name="Furey T.S."/>
            <person name="Miller W."/>
            <person name="Eichler E.E."/>
            <person name="Bork P."/>
            <person name="Suyama M."/>
            <person name="Torrents D."/>
            <person name="Waterston R.H."/>
            <person name="Wilson R.K."/>
        </authorList>
    </citation>
    <scope>NUCLEOTIDE SEQUENCE [LARGE SCALE GENOMIC DNA]</scope>
</reference>
<reference key="3">
    <citation type="journal article" date="2004" name="Genome Res.">
        <title>The status, quality, and expansion of the NIH full-length cDNA project: the Mammalian Gene Collection (MGC).</title>
        <authorList>
            <consortium name="The MGC Project Team"/>
        </authorList>
    </citation>
    <scope>NUCLEOTIDE SEQUENCE [LARGE SCALE MRNA] (ISOFORMS 1 AND 7)</scope>
    <source>
        <tissue>Brain</tissue>
    </source>
</reference>
<reference key="4">
    <citation type="journal article" date="2004" name="Nat. Genet.">
        <title>Complete sequencing and characterization of 21,243 full-length human cDNAs.</title>
        <authorList>
            <person name="Ota T."/>
            <person name="Suzuki Y."/>
            <person name="Nishikawa T."/>
            <person name="Otsuki T."/>
            <person name="Sugiyama T."/>
            <person name="Irie R."/>
            <person name="Wakamatsu A."/>
            <person name="Hayashi K."/>
            <person name="Sato H."/>
            <person name="Nagai K."/>
            <person name="Kimura K."/>
            <person name="Makita H."/>
            <person name="Sekine M."/>
            <person name="Obayashi M."/>
            <person name="Nishi T."/>
            <person name="Shibahara T."/>
            <person name="Tanaka T."/>
            <person name="Ishii S."/>
            <person name="Yamamoto J."/>
            <person name="Saito K."/>
            <person name="Kawai Y."/>
            <person name="Isono Y."/>
            <person name="Nakamura Y."/>
            <person name="Nagahari K."/>
            <person name="Murakami K."/>
            <person name="Yasuda T."/>
            <person name="Iwayanagi T."/>
            <person name="Wagatsuma M."/>
            <person name="Shiratori A."/>
            <person name="Sudo H."/>
            <person name="Hosoiri T."/>
            <person name="Kaku Y."/>
            <person name="Kodaira H."/>
            <person name="Kondo H."/>
            <person name="Sugawara M."/>
            <person name="Takahashi M."/>
            <person name="Kanda K."/>
            <person name="Yokoi T."/>
            <person name="Furuya T."/>
            <person name="Kikkawa E."/>
            <person name="Omura Y."/>
            <person name="Abe K."/>
            <person name="Kamihara K."/>
            <person name="Katsuta N."/>
            <person name="Sato K."/>
            <person name="Tanikawa M."/>
            <person name="Yamazaki M."/>
            <person name="Ninomiya K."/>
            <person name="Ishibashi T."/>
            <person name="Yamashita H."/>
            <person name="Murakawa K."/>
            <person name="Fujimori K."/>
            <person name="Tanai H."/>
            <person name="Kimata M."/>
            <person name="Watanabe M."/>
            <person name="Hiraoka S."/>
            <person name="Chiba Y."/>
            <person name="Ishida S."/>
            <person name="Ono Y."/>
            <person name="Takiguchi S."/>
            <person name="Watanabe S."/>
            <person name="Yosida M."/>
            <person name="Hotuta T."/>
            <person name="Kusano J."/>
            <person name="Kanehori K."/>
            <person name="Takahashi-Fujii A."/>
            <person name="Hara H."/>
            <person name="Tanase T.-O."/>
            <person name="Nomura Y."/>
            <person name="Togiya S."/>
            <person name="Komai F."/>
            <person name="Hara R."/>
            <person name="Takeuchi K."/>
            <person name="Arita M."/>
            <person name="Imose N."/>
            <person name="Musashino K."/>
            <person name="Yuuki H."/>
            <person name="Oshima A."/>
            <person name="Sasaki N."/>
            <person name="Aotsuka S."/>
            <person name="Yoshikawa Y."/>
            <person name="Matsunawa H."/>
            <person name="Ichihara T."/>
            <person name="Shiohata N."/>
            <person name="Sano S."/>
            <person name="Moriya S."/>
            <person name="Momiyama H."/>
            <person name="Satoh N."/>
            <person name="Takami S."/>
            <person name="Terashima Y."/>
            <person name="Suzuki O."/>
            <person name="Nakagawa S."/>
            <person name="Senoh A."/>
            <person name="Mizoguchi H."/>
            <person name="Goto Y."/>
            <person name="Shimizu F."/>
            <person name="Wakebe H."/>
            <person name="Hishigaki H."/>
            <person name="Watanabe T."/>
            <person name="Sugiyama A."/>
            <person name="Takemoto M."/>
            <person name="Kawakami B."/>
            <person name="Yamazaki M."/>
            <person name="Watanabe K."/>
            <person name="Kumagai A."/>
            <person name="Itakura S."/>
            <person name="Fukuzumi Y."/>
            <person name="Fujimori Y."/>
            <person name="Komiyama M."/>
            <person name="Tashiro H."/>
            <person name="Tanigami A."/>
            <person name="Fujiwara T."/>
            <person name="Ono T."/>
            <person name="Yamada K."/>
            <person name="Fujii Y."/>
            <person name="Ozaki K."/>
            <person name="Hirao M."/>
            <person name="Ohmori Y."/>
            <person name="Kawabata A."/>
            <person name="Hikiji T."/>
            <person name="Kobatake N."/>
            <person name="Inagaki H."/>
            <person name="Ikema Y."/>
            <person name="Okamoto S."/>
            <person name="Okitani R."/>
            <person name="Kawakami T."/>
            <person name="Noguchi S."/>
            <person name="Itoh T."/>
            <person name="Shigeta K."/>
            <person name="Senba T."/>
            <person name="Matsumura K."/>
            <person name="Nakajima Y."/>
            <person name="Mizuno T."/>
            <person name="Morinaga M."/>
            <person name="Sasaki M."/>
            <person name="Togashi T."/>
            <person name="Oyama M."/>
            <person name="Hata H."/>
            <person name="Watanabe M."/>
            <person name="Komatsu T."/>
            <person name="Mizushima-Sugano J."/>
            <person name="Satoh T."/>
            <person name="Shirai Y."/>
            <person name="Takahashi Y."/>
            <person name="Nakagawa K."/>
            <person name="Okumura K."/>
            <person name="Nagase T."/>
            <person name="Nomura N."/>
            <person name="Kikuchi H."/>
            <person name="Masuho Y."/>
            <person name="Yamashita R."/>
            <person name="Nakai K."/>
            <person name="Yada T."/>
            <person name="Nakamura Y."/>
            <person name="Ohara O."/>
            <person name="Isogai T."/>
            <person name="Sugano S."/>
        </authorList>
    </citation>
    <scope>NUCLEOTIDE SEQUENCE [LARGE SCALE MRNA] OF 1075-1307 (ISOFORM 1)</scope>
    <source>
        <tissue>Lung</tissue>
    </source>
</reference>
<reference key="5">
    <citation type="journal article" date="2007" name="Nature">
        <title>Patterns of somatic mutation in human cancer genomes.</title>
        <authorList>
            <person name="Greenman C."/>
            <person name="Stephens P."/>
            <person name="Smith R."/>
            <person name="Dalgliesh G.L."/>
            <person name="Hunter C."/>
            <person name="Bignell G."/>
            <person name="Davies H."/>
            <person name="Teague J."/>
            <person name="Butler A."/>
            <person name="Stevens C."/>
            <person name="Edkins S."/>
            <person name="O'Meara S."/>
            <person name="Vastrik I."/>
            <person name="Schmidt E.E."/>
            <person name="Avis T."/>
            <person name="Barthorpe S."/>
            <person name="Bhamra G."/>
            <person name="Buck G."/>
            <person name="Choudhury B."/>
            <person name="Clements J."/>
            <person name="Cole J."/>
            <person name="Dicks E."/>
            <person name="Forbes S."/>
            <person name="Gray K."/>
            <person name="Halliday K."/>
            <person name="Harrison R."/>
            <person name="Hills K."/>
            <person name="Hinton J."/>
            <person name="Jenkinson A."/>
            <person name="Jones D."/>
            <person name="Menzies A."/>
            <person name="Mironenko T."/>
            <person name="Perry J."/>
            <person name="Raine K."/>
            <person name="Richardson D."/>
            <person name="Shepherd R."/>
            <person name="Small A."/>
            <person name="Tofts C."/>
            <person name="Varian J."/>
            <person name="Webb T."/>
            <person name="West S."/>
            <person name="Widaa S."/>
            <person name="Yates A."/>
            <person name="Cahill D.P."/>
            <person name="Louis D.N."/>
            <person name="Goldstraw P."/>
            <person name="Nicholson A.G."/>
            <person name="Brasseur F."/>
            <person name="Looijenga L."/>
            <person name="Weber B.L."/>
            <person name="Chiew Y.-E."/>
            <person name="DeFazio A."/>
            <person name="Greaves M.F."/>
            <person name="Green A.R."/>
            <person name="Campbell P."/>
            <person name="Birney E."/>
            <person name="Easton D.F."/>
            <person name="Chenevix-Trench G."/>
            <person name="Tan M.-H."/>
            <person name="Khoo S.K."/>
            <person name="Teh B.T."/>
            <person name="Yuen S.T."/>
            <person name="Leung S.Y."/>
            <person name="Wooster R."/>
            <person name="Futreal P.A."/>
            <person name="Stratton M.R."/>
        </authorList>
    </citation>
    <scope>VARIANT [LARGE SCALE ANALYSIS] MET-500</scope>
</reference>
<dbReference type="EC" id="2.7.11.1"/>
<dbReference type="EMBL" id="AY574901">
    <property type="protein sequence ID" value="AAT81410.1"/>
    <property type="molecule type" value="mRNA"/>
</dbReference>
<dbReference type="EMBL" id="AY574902">
    <property type="protein sequence ID" value="AAT81411.1"/>
    <property type="molecule type" value="mRNA"/>
</dbReference>
<dbReference type="EMBL" id="AY574903">
    <property type="protein sequence ID" value="AAT81412.1"/>
    <property type="status" value="ALT_SEQ"/>
    <property type="molecule type" value="mRNA"/>
</dbReference>
<dbReference type="EMBL" id="AY574904">
    <property type="protein sequence ID" value="AAT81413.1"/>
    <property type="molecule type" value="mRNA"/>
</dbReference>
<dbReference type="EMBL" id="AY574905">
    <property type="protein sequence ID" value="AAT81414.1"/>
    <property type="molecule type" value="mRNA"/>
</dbReference>
<dbReference type="EMBL" id="AK026727">
    <property type="protein sequence ID" value="BAB15538.1"/>
    <property type="status" value="ALT_INIT"/>
    <property type="molecule type" value="mRNA"/>
</dbReference>
<dbReference type="EMBL" id="AC016725">
    <property type="protein sequence ID" value="AAY14999.1"/>
    <property type="molecule type" value="Genomic_DNA"/>
</dbReference>
<dbReference type="EMBL" id="AC020602">
    <property type="status" value="NOT_ANNOTATED_CDS"/>
    <property type="molecule type" value="Genomic_DNA"/>
</dbReference>
<dbReference type="EMBL" id="BC034417">
    <property type="protein sequence ID" value="AAH34417.1"/>
    <property type="molecule type" value="mRNA"/>
</dbReference>
<dbReference type="EMBL" id="BC137276">
    <property type="protein sequence ID" value="AAI37277.1"/>
    <property type="molecule type" value="mRNA"/>
</dbReference>
<dbReference type="EMBL" id="BC137277">
    <property type="protein sequence ID" value="AAI37278.1"/>
    <property type="molecule type" value="mRNA"/>
</dbReference>
<dbReference type="EMBL" id="BC144555">
    <property type="protein sequence ID" value="AAI44556.1"/>
    <property type="molecule type" value="mRNA"/>
</dbReference>
<dbReference type="CCDS" id="CCDS2176.2">
    <molecule id="Q56UN5-1"/>
</dbReference>
<dbReference type="CCDS" id="CCDS33293.1">
    <molecule id="Q56UN5-5"/>
</dbReference>
<dbReference type="CCDS" id="CCDS63020.1">
    <molecule id="Q56UN5-3"/>
</dbReference>
<dbReference type="CCDS" id="CCDS63021.1">
    <molecule id="Q56UN5-7"/>
</dbReference>
<dbReference type="CCDS" id="CCDS63022.1">
    <molecule id="Q56UN5-4"/>
</dbReference>
<dbReference type="RefSeq" id="NP_001018054.1">
    <molecule id="Q56UN5-3"/>
    <property type="nucleotide sequence ID" value="NM_001018044.3"/>
</dbReference>
<dbReference type="RefSeq" id="NP_001018056.1">
    <molecule id="Q56UN5-5"/>
    <property type="nucleotide sequence ID" value="NM_001018046.3"/>
</dbReference>
<dbReference type="RefSeq" id="NP_001018057.1">
    <molecule id="Q56UN5-4"/>
    <property type="nucleotide sequence ID" value="NM_001018047.3"/>
</dbReference>
<dbReference type="RefSeq" id="NP_001269812.1">
    <molecule id="Q56UN5-7"/>
    <property type="nucleotide sequence ID" value="NM_001282883.2"/>
</dbReference>
<dbReference type="RefSeq" id="NP_001308106.1">
    <property type="nucleotide sequence ID" value="NM_001321177.1"/>
</dbReference>
<dbReference type="RefSeq" id="NP_001387367.1">
    <molecule id="Q56UN5-1"/>
    <property type="nucleotide sequence ID" value="NM_001400438.1"/>
</dbReference>
<dbReference type="RefSeq" id="NP_079328.3">
    <molecule id="Q56UN5-1"/>
    <property type="nucleotide sequence ID" value="NM_025052.5"/>
</dbReference>
<dbReference type="RefSeq" id="XP_011510194.1">
    <property type="nucleotide sequence ID" value="XM_011511892.1"/>
</dbReference>
<dbReference type="RefSeq" id="XP_016860492.1">
    <property type="nucleotide sequence ID" value="XM_017005003.1"/>
</dbReference>
<dbReference type="SMR" id="Q56UN5"/>
<dbReference type="BioGRID" id="123124">
    <property type="interactions" value="24"/>
</dbReference>
<dbReference type="FunCoup" id="Q56UN5">
    <property type="interactions" value="442"/>
</dbReference>
<dbReference type="IntAct" id="Q56UN5">
    <property type="interactions" value="1"/>
</dbReference>
<dbReference type="MINT" id="Q56UN5"/>
<dbReference type="STRING" id="9606.ENSP00000376647"/>
<dbReference type="BindingDB" id="Q56UN5"/>
<dbReference type="ChEMBL" id="CHEMBL6191"/>
<dbReference type="DrugBank" id="DB12010">
    <property type="generic name" value="Fostamatinib"/>
</dbReference>
<dbReference type="DrugCentral" id="Q56UN5"/>
<dbReference type="GuidetoPHARMACOLOGY" id="2076"/>
<dbReference type="iPTMnet" id="Q56UN5"/>
<dbReference type="PhosphoSitePlus" id="Q56UN5"/>
<dbReference type="BioMuta" id="MAP3K19"/>
<dbReference type="DMDM" id="74755104"/>
<dbReference type="jPOST" id="Q56UN5"/>
<dbReference type="MassIVE" id="Q56UN5"/>
<dbReference type="PaxDb" id="9606-ENSP00000365005"/>
<dbReference type="PeptideAtlas" id="Q56UN5"/>
<dbReference type="ProteomicsDB" id="62584">
    <molecule id="Q56UN5-1"/>
</dbReference>
<dbReference type="ProteomicsDB" id="62586">
    <molecule id="Q56UN5-3"/>
</dbReference>
<dbReference type="ProteomicsDB" id="62587">
    <molecule id="Q56UN5-4"/>
</dbReference>
<dbReference type="ProteomicsDB" id="62588">
    <molecule id="Q56UN5-5"/>
</dbReference>
<dbReference type="ProteomicsDB" id="7260"/>
<dbReference type="Antibodypedia" id="2102">
    <property type="antibodies" value="56 antibodies from 18 providers"/>
</dbReference>
<dbReference type="DNASU" id="80122"/>
<dbReference type="Ensembl" id="ENST00000358371.9">
    <molecule id="Q56UN5-3"/>
    <property type="protein sequence ID" value="ENSP00000351140.4"/>
    <property type="gene ID" value="ENSG00000176601.14"/>
</dbReference>
<dbReference type="Ensembl" id="ENST00000375844.7">
    <molecule id="Q56UN5-5"/>
    <property type="protein sequence ID" value="ENSP00000365004.3"/>
    <property type="gene ID" value="ENSG00000176601.14"/>
</dbReference>
<dbReference type="Ensembl" id="ENST00000375845.8">
    <molecule id="Q56UN5-1"/>
    <property type="protein sequence ID" value="ENSP00000365005.3"/>
    <property type="gene ID" value="ENSG00000176601.14"/>
</dbReference>
<dbReference type="Ensembl" id="ENST00000392915.7">
    <molecule id="Q56UN5-1"/>
    <property type="protein sequence ID" value="ENSP00000376647.2"/>
    <property type="gene ID" value="ENSG00000176601.14"/>
</dbReference>
<dbReference type="Ensembl" id="ENST00000392917.8">
    <molecule id="Q56UN5-7"/>
    <property type="protein sequence ID" value="ENSP00000376649.3"/>
    <property type="gene ID" value="ENSG00000176601.14"/>
</dbReference>
<dbReference type="Ensembl" id="ENST00000392918.7">
    <molecule id="Q56UN5-4"/>
    <property type="protein sequence ID" value="ENSP00000376650.3"/>
    <property type="gene ID" value="ENSG00000176601.14"/>
</dbReference>
<dbReference type="GeneID" id="80122"/>
<dbReference type="KEGG" id="hsa:80122"/>
<dbReference type="MANE-Select" id="ENST00000392915.7">
    <property type="protein sequence ID" value="ENSP00000376647.2"/>
    <property type="RefSeq nucleotide sequence ID" value="NM_025052.5"/>
    <property type="RefSeq protein sequence ID" value="NP_079328.3"/>
</dbReference>
<dbReference type="UCSC" id="uc002tue.2">
    <molecule id="Q56UN5-1"/>
    <property type="organism name" value="human"/>
</dbReference>
<dbReference type="AGR" id="HGNC:26249"/>
<dbReference type="CTD" id="80122"/>
<dbReference type="DisGeNET" id="80122"/>
<dbReference type="GeneCards" id="MAP3K19"/>
<dbReference type="HGNC" id="HGNC:26249">
    <property type="gene designation" value="MAP3K19"/>
</dbReference>
<dbReference type="HPA" id="ENSG00000176601">
    <property type="expression patterns" value="Tissue enhanced (choroid plexus, fallopian tube, testis)"/>
</dbReference>
<dbReference type="neXtProt" id="NX_Q56UN5"/>
<dbReference type="OpenTargets" id="ENSG00000176601"/>
<dbReference type="PharmGKB" id="PA142670554"/>
<dbReference type="VEuPathDB" id="HostDB:ENSG00000176601"/>
<dbReference type="eggNOG" id="KOG0198">
    <property type="taxonomic scope" value="Eukaryota"/>
</dbReference>
<dbReference type="GeneTree" id="ENSGT00940000160383"/>
<dbReference type="HOGENOM" id="CLU_599846_0_0_1"/>
<dbReference type="InParanoid" id="Q56UN5"/>
<dbReference type="OMA" id="QRMERHS"/>
<dbReference type="OrthoDB" id="266718at2759"/>
<dbReference type="PAN-GO" id="Q56UN5">
    <property type="GO annotations" value="3 GO annotations based on evolutionary models"/>
</dbReference>
<dbReference type="PhylomeDB" id="Q56UN5"/>
<dbReference type="TreeFam" id="TF332735"/>
<dbReference type="PathwayCommons" id="Q56UN5"/>
<dbReference type="SignaLink" id="Q56UN5"/>
<dbReference type="BioGRID-ORCS" id="80122">
    <property type="hits" value="12 hits in 1158 CRISPR screens"/>
</dbReference>
<dbReference type="CD-CODE" id="232F8A39">
    <property type="entry name" value="P-body"/>
</dbReference>
<dbReference type="ChiTaRS" id="MAP3K19">
    <property type="organism name" value="human"/>
</dbReference>
<dbReference type="GenomeRNAi" id="80122"/>
<dbReference type="Pharos" id="Q56UN5">
    <property type="development level" value="Tchem"/>
</dbReference>
<dbReference type="PRO" id="PR:Q56UN5"/>
<dbReference type="Proteomes" id="UP000005640">
    <property type="component" value="Chromosome 2"/>
</dbReference>
<dbReference type="RNAct" id="Q56UN5">
    <property type="molecule type" value="protein"/>
</dbReference>
<dbReference type="Bgee" id="ENSG00000176601">
    <property type="expression patterns" value="Expressed in bronchial epithelial cell and 133 other cell types or tissues"/>
</dbReference>
<dbReference type="ExpressionAtlas" id="Q56UN5">
    <property type="expression patterns" value="baseline and differential"/>
</dbReference>
<dbReference type="GO" id="GO:0005524">
    <property type="term" value="F:ATP binding"/>
    <property type="evidence" value="ECO:0007669"/>
    <property type="project" value="UniProtKB-KW"/>
</dbReference>
<dbReference type="GO" id="GO:0004709">
    <property type="term" value="F:MAP kinase kinase kinase activity"/>
    <property type="evidence" value="ECO:0007669"/>
    <property type="project" value="UniProtKB-ARBA"/>
</dbReference>
<dbReference type="GO" id="GO:0106310">
    <property type="term" value="F:protein serine kinase activity"/>
    <property type="evidence" value="ECO:0007669"/>
    <property type="project" value="RHEA"/>
</dbReference>
<dbReference type="GO" id="GO:0000165">
    <property type="term" value="P:MAPK cascade"/>
    <property type="evidence" value="ECO:0000318"/>
    <property type="project" value="GO_Central"/>
</dbReference>
<dbReference type="CDD" id="cd06631">
    <property type="entry name" value="STKc_YSK4"/>
    <property type="match status" value="1"/>
</dbReference>
<dbReference type="FunFam" id="1.10.510.10:FF:000331">
    <property type="entry name" value="Mitogen-activated protein kinase kinase kinase 19"/>
    <property type="match status" value="1"/>
</dbReference>
<dbReference type="Gene3D" id="1.10.510.10">
    <property type="entry name" value="Transferase(Phosphotransferase) domain 1"/>
    <property type="match status" value="1"/>
</dbReference>
<dbReference type="InterPro" id="IPR011009">
    <property type="entry name" value="Kinase-like_dom_sf"/>
</dbReference>
<dbReference type="InterPro" id="IPR000719">
    <property type="entry name" value="Prot_kinase_dom"/>
</dbReference>
<dbReference type="InterPro" id="IPR017441">
    <property type="entry name" value="Protein_kinase_ATP_BS"/>
</dbReference>
<dbReference type="InterPro" id="IPR008271">
    <property type="entry name" value="Ser/Thr_kinase_AS"/>
</dbReference>
<dbReference type="PANTHER" id="PTHR11584:SF369">
    <property type="entry name" value="MITOGEN-ACTIVATED PROTEIN KINASE KINASE KINASE 19-RELATED"/>
    <property type="match status" value="1"/>
</dbReference>
<dbReference type="PANTHER" id="PTHR11584">
    <property type="entry name" value="SERINE/THREONINE PROTEIN KINASE"/>
    <property type="match status" value="1"/>
</dbReference>
<dbReference type="Pfam" id="PF00069">
    <property type="entry name" value="Pkinase"/>
    <property type="match status" value="1"/>
</dbReference>
<dbReference type="SMART" id="SM00220">
    <property type="entry name" value="S_TKc"/>
    <property type="match status" value="1"/>
</dbReference>
<dbReference type="SUPFAM" id="SSF56112">
    <property type="entry name" value="Protein kinase-like (PK-like)"/>
    <property type="match status" value="1"/>
</dbReference>
<dbReference type="PROSITE" id="PS00107">
    <property type="entry name" value="PROTEIN_KINASE_ATP"/>
    <property type="match status" value="1"/>
</dbReference>
<dbReference type="PROSITE" id="PS50011">
    <property type="entry name" value="PROTEIN_KINASE_DOM"/>
    <property type="match status" value="1"/>
</dbReference>
<dbReference type="PROSITE" id="PS00108">
    <property type="entry name" value="PROTEIN_KINASE_ST"/>
    <property type="match status" value="1"/>
</dbReference>